<reference key="1">
    <citation type="journal article" date="2008" name="PLoS Genet.">
        <title>Complete genome sequence of the complex carbohydrate-degrading marine bacterium, Saccharophagus degradans strain 2-40 T.</title>
        <authorList>
            <person name="Weiner R.M."/>
            <person name="Taylor L.E. II"/>
            <person name="Henrissat B."/>
            <person name="Hauser L."/>
            <person name="Land M."/>
            <person name="Coutinho P.M."/>
            <person name="Rancurel C."/>
            <person name="Saunders E.H."/>
            <person name="Longmire A.G."/>
            <person name="Zhang H."/>
            <person name="Bayer E.A."/>
            <person name="Gilbert H.J."/>
            <person name="Larimer F."/>
            <person name="Zhulin I.B."/>
            <person name="Ekborg N.A."/>
            <person name="Lamed R."/>
            <person name="Richardson P.M."/>
            <person name="Borovok I."/>
            <person name="Hutcheson S."/>
        </authorList>
    </citation>
    <scope>NUCLEOTIDE SEQUENCE [LARGE SCALE GENOMIC DNA]</scope>
    <source>
        <strain>2-40 / ATCC 43961 / DSM 17024</strain>
    </source>
</reference>
<sequence>MQVYYDKDCDLSIIQGKKVAIIGYGSQGHAHACNLKDSGVDVTVGLRTGSSSVAKAEAHGLKVADVATAVAAADVVMILTPDEFQSVLYKEEIEPNIKQGATLAFAHGFAIHYNQVVPRADLDVIMVAPKAPGHTVRSEFVKGGGIPDLIAIFQDASGTAKEVALSYASGVGGGRSGIIETTFKDETETDLFGEQAVLCGGAVELVKMGFETLTEAGYAPEMAYFECLHELKLIVDLMYEGGIANMNYSISNNAEYGEYVTGPKVINEESRKAMRQALKDIQQGEYAKNFILEGQSNYPSMTAWRRNNAAHPIEQVGGKLRAMMPWIESNKIIDKTKN</sequence>
<proteinExistence type="inferred from homology"/>
<gene>
    <name evidence="1" type="primary">ilvC</name>
    <name type="ordered locus">Sde_2539</name>
</gene>
<dbReference type="EC" id="1.1.1.86" evidence="1"/>
<dbReference type="EMBL" id="CP000282">
    <property type="protein sequence ID" value="ABD81799.1"/>
    <property type="molecule type" value="Genomic_DNA"/>
</dbReference>
<dbReference type="RefSeq" id="WP_011469016.1">
    <property type="nucleotide sequence ID" value="NC_007912.1"/>
</dbReference>
<dbReference type="SMR" id="Q21HN0"/>
<dbReference type="STRING" id="203122.Sde_2539"/>
<dbReference type="GeneID" id="98614203"/>
<dbReference type="KEGG" id="sde:Sde_2539"/>
<dbReference type="eggNOG" id="COG0059">
    <property type="taxonomic scope" value="Bacteria"/>
</dbReference>
<dbReference type="HOGENOM" id="CLU_033821_0_1_6"/>
<dbReference type="OrthoDB" id="9804088at2"/>
<dbReference type="UniPathway" id="UPA00047">
    <property type="reaction ID" value="UER00056"/>
</dbReference>
<dbReference type="UniPathway" id="UPA00049">
    <property type="reaction ID" value="UER00060"/>
</dbReference>
<dbReference type="Proteomes" id="UP000001947">
    <property type="component" value="Chromosome"/>
</dbReference>
<dbReference type="GO" id="GO:0005829">
    <property type="term" value="C:cytosol"/>
    <property type="evidence" value="ECO:0007669"/>
    <property type="project" value="TreeGrafter"/>
</dbReference>
<dbReference type="GO" id="GO:0004455">
    <property type="term" value="F:ketol-acid reductoisomerase activity"/>
    <property type="evidence" value="ECO:0007669"/>
    <property type="project" value="UniProtKB-UniRule"/>
</dbReference>
<dbReference type="GO" id="GO:0000287">
    <property type="term" value="F:magnesium ion binding"/>
    <property type="evidence" value="ECO:0007669"/>
    <property type="project" value="UniProtKB-UniRule"/>
</dbReference>
<dbReference type="GO" id="GO:0050661">
    <property type="term" value="F:NADP binding"/>
    <property type="evidence" value="ECO:0007669"/>
    <property type="project" value="InterPro"/>
</dbReference>
<dbReference type="GO" id="GO:0009097">
    <property type="term" value="P:isoleucine biosynthetic process"/>
    <property type="evidence" value="ECO:0007669"/>
    <property type="project" value="UniProtKB-UniRule"/>
</dbReference>
<dbReference type="GO" id="GO:0009099">
    <property type="term" value="P:L-valine biosynthetic process"/>
    <property type="evidence" value="ECO:0007669"/>
    <property type="project" value="UniProtKB-UniRule"/>
</dbReference>
<dbReference type="FunFam" id="3.40.50.720:FF:000023">
    <property type="entry name" value="Ketol-acid reductoisomerase (NADP(+))"/>
    <property type="match status" value="1"/>
</dbReference>
<dbReference type="Gene3D" id="6.10.240.10">
    <property type="match status" value="1"/>
</dbReference>
<dbReference type="Gene3D" id="3.40.50.720">
    <property type="entry name" value="NAD(P)-binding Rossmann-like Domain"/>
    <property type="match status" value="1"/>
</dbReference>
<dbReference type="HAMAP" id="MF_00435">
    <property type="entry name" value="IlvC"/>
    <property type="match status" value="1"/>
</dbReference>
<dbReference type="InterPro" id="IPR008927">
    <property type="entry name" value="6-PGluconate_DH-like_C_sf"/>
</dbReference>
<dbReference type="InterPro" id="IPR013023">
    <property type="entry name" value="KARI"/>
</dbReference>
<dbReference type="InterPro" id="IPR000506">
    <property type="entry name" value="KARI_C"/>
</dbReference>
<dbReference type="InterPro" id="IPR013116">
    <property type="entry name" value="KARI_N"/>
</dbReference>
<dbReference type="InterPro" id="IPR014359">
    <property type="entry name" value="KARI_prok"/>
</dbReference>
<dbReference type="InterPro" id="IPR036291">
    <property type="entry name" value="NAD(P)-bd_dom_sf"/>
</dbReference>
<dbReference type="NCBIfam" id="TIGR00465">
    <property type="entry name" value="ilvC"/>
    <property type="match status" value="1"/>
</dbReference>
<dbReference type="NCBIfam" id="NF004017">
    <property type="entry name" value="PRK05479.1"/>
    <property type="match status" value="1"/>
</dbReference>
<dbReference type="NCBIfam" id="NF009940">
    <property type="entry name" value="PRK13403.1"/>
    <property type="match status" value="1"/>
</dbReference>
<dbReference type="PANTHER" id="PTHR21371">
    <property type="entry name" value="KETOL-ACID REDUCTOISOMERASE, MITOCHONDRIAL"/>
    <property type="match status" value="1"/>
</dbReference>
<dbReference type="PANTHER" id="PTHR21371:SF1">
    <property type="entry name" value="KETOL-ACID REDUCTOISOMERASE, MITOCHONDRIAL"/>
    <property type="match status" value="1"/>
</dbReference>
<dbReference type="Pfam" id="PF01450">
    <property type="entry name" value="KARI_C"/>
    <property type="match status" value="1"/>
</dbReference>
<dbReference type="Pfam" id="PF07991">
    <property type="entry name" value="KARI_N"/>
    <property type="match status" value="1"/>
</dbReference>
<dbReference type="PIRSF" id="PIRSF000116">
    <property type="entry name" value="IlvC_gammaproteo"/>
    <property type="match status" value="1"/>
</dbReference>
<dbReference type="SUPFAM" id="SSF48179">
    <property type="entry name" value="6-phosphogluconate dehydrogenase C-terminal domain-like"/>
    <property type="match status" value="1"/>
</dbReference>
<dbReference type="SUPFAM" id="SSF51735">
    <property type="entry name" value="NAD(P)-binding Rossmann-fold domains"/>
    <property type="match status" value="1"/>
</dbReference>
<dbReference type="PROSITE" id="PS51851">
    <property type="entry name" value="KARI_C"/>
    <property type="match status" value="1"/>
</dbReference>
<dbReference type="PROSITE" id="PS51850">
    <property type="entry name" value="KARI_N"/>
    <property type="match status" value="1"/>
</dbReference>
<name>ILVC_SACD2</name>
<protein>
    <recommendedName>
        <fullName evidence="1">Ketol-acid reductoisomerase (NADP(+))</fullName>
        <shortName evidence="1">KARI</shortName>
        <ecNumber evidence="1">1.1.1.86</ecNumber>
    </recommendedName>
    <alternativeName>
        <fullName evidence="1">Acetohydroxy-acid isomeroreductase</fullName>
        <shortName evidence="1">AHIR</shortName>
    </alternativeName>
    <alternativeName>
        <fullName evidence="1">Alpha-keto-beta-hydroxylacyl reductoisomerase</fullName>
    </alternativeName>
    <alternativeName>
        <fullName evidence="1">Ketol-acid reductoisomerase type 1</fullName>
    </alternativeName>
    <alternativeName>
        <fullName evidence="1">Ketol-acid reductoisomerase type I</fullName>
    </alternativeName>
</protein>
<keyword id="KW-0028">Amino-acid biosynthesis</keyword>
<keyword id="KW-0100">Branched-chain amino acid biosynthesis</keyword>
<keyword id="KW-0460">Magnesium</keyword>
<keyword id="KW-0479">Metal-binding</keyword>
<keyword id="KW-0521">NADP</keyword>
<keyword id="KW-0560">Oxidoreductase</keyword>
<keyword id="KW-1185">Reference proteome</keyword>
<accession>Q21HN0</accession>
<organism>
    <name type="scientific">Saccharophagus degradans (strain 2-40 / ATCC 43961 / DSM 17024)</name>
    <dbReference type="NCBI Taxonomy" id="203122"/>
    <lineage>
        <taxon>Bacteria</taxon>
        <taxon>Pseudomonadati</taxon>
        <taxon>Pseudomonadota</taxon>
        <taxon>Gammaproteobacteria</taxon>
        <taxon>Cellvibrionales</taxon>
        <taxon>Cellvibrionaceae</taxon>
        <taxon>Saccharophagus</taxon>
    </lineage>
</organism>
<feature type="chain" id="PRO_0000252785" description="Ketol-acid reductoisomerase (NADP(+))">
    <location>
        <begin position="1"/>
        <end position="338"/>
    </location>
</feature>
<feature type="domain" description="KARI N-terminal Rossmann" evidence="2">
    <location>
        <begin position="1"/>
        <end position="181"/>
    </location>
</feature>
<feature type="domain" description="KARI C-terminal knotted" evidence="3">
    <location>
        <begin position="182"/>
        <end position="327"/>
    </location>
</feature>
<feature type="active site" evidence="1">
    <location>
        <position position="107"/>
    </location>
</feature>
<feature type="binding site" evidence="1">
    <location>
        <begin position="24"/>
        <end position="27"/>
    </location>
    <ligand>
        <name>NADP(+)</name>
        <dbReference type="ChEBI" id="CHEBI:58349"/>
    </ligand>
</feature>
<feature type="binding site" evidence="1">
    <location>
        <position position="47"/>
    </location>
    <ligand>
        <name>NADP(+)</name>
        <dbReference type="ChEBI" id="CHEBI:58349"/>
    </ligand>
</feature>
<feature type="binding site" evidence="1">
    <location>
        <position position="50"/>
    </location>
    <ligand>
        <name>NADP(+)</name>
        <dbReference type="ChEBI" id="CHEBI:58349"/>
    </ligand>
</feature>
<feature type="binding site" evidence="1">
    <location>
        <position position="52"/>
    </location>
    <ligand>
        <name>NADP(+)</name>
        <dbReference type="ChEBI" id="CHEBI:58349"/>
    </ligand>
</feature>
<feature type="binding site" evidence="1">
    <location>
        <begin position="82"/>
        <end position="85"/>
    </location>
    <ligand>
        <name>NADP(+)</name>
        <dbReference type="ChEBI" id="CHEBI:58349"/>
    </ligand>
</feature>
<feature type="binding site" evidence="1">
    <location>
        <position position="133"/>
    </location>
    <ligand>
        <name>NADP(+)</name>
        <dbReference type="ChEBI" id="CHEBI:58349"/>
    </ligand>
</feature>
<feature type="binding site" evidence="1">
    <location>
        <position position="190"/>
    </location>
    <ligand>
        <name>Mg(2+)</name>
        <dbReference type="ChEBI" id="CHEBI:18420"/>
        <label>1</label>
    </ligand>
</feature>
<feature type="binding site" evidence="1">
    <location>
        <position position="190"/>
    </location>
    <ligand>
        <name>Mg(2+)</name>
        <dbReference type="ChEBI" id="CHEBI:18420"/>
        <label>2</label>
    </ligand>
</feature>
<feature type="binding site" evidence="1">
    <location>
        <position position="194"/>
    </location>
    <ligand>
        <name>Mg(2+)</name>
        <dbReference type="ChEBI" id="CHEBI:18420"/>
        <label>1</label>
    </ligand>
</feature>
<feature type="binding site" evidence="1">
    <location>
        <position position="226"/>
    </location>
    <ligand>
        <name>Mg(2+)</name>
        <dbReference type="ChEBI" id="CHEBI:18420"/>
        <label>2</label>
    </ligand>
</feature>
<feature type="binding site" evidence="1">
    <location>
        <position position="230"/>
    </location>
    <ligand>
        <name>Mg(2+)</name>
        <dbReference type="ChEBI" id="CHEBI:18420"/>
        <label>2</label>
    </ligand>
</feature>
<feature type="binding site" evidence="1">
    <location>
        <position position="251"/>
    </location>
    <ligand>
        <name>substrate</name>
    </ligand>
</feature>
<evidence type="ECO:0000255" key="1">
    <source>
        <dbReference type="HAMAP-Rule" id="MF_00435"/>
    </source>
</evidence>
<evidence type="ECO:0000255" key="2">
    <source>
        <dbReference type="PROSITE-ProRule" id="PRU01197"/>
    </source>
</evidence>
<evidence type="ECO:0000255" key="3">
    <source>
        <dbReference type="PROSITE-ProRule" id="PRU01198"/>
    </source>
</evidence>
<comment type="function">
    <text evidence="1">Involved in the biosynthesis of branched-chain amino acids (BCAA). Catalyzes an alkyl-migration followed by a ketol-acid reduction of (S)-2-acetolactate (S2AL) to yield (R)-2,3-dihydroxy-isovalerate. In the isomerase reaction, S2AL is rearranged via a Mg-dependent methyl migration to produce 3-hydroxy-3-methyl-2-ketobutyrate (HMKB). In the reductase reaction, this 2-ketoacid undergoes a metal-dependent reduction by NADPH to yield (R)-2,3-dihydroxy-isovalerate.</text>
</comment>
<comment type="catalytic activity">
    <reaction evidence="1">
        <text>(2R)-2,3-dihydroxy-3-methylbutanoate + NADP(+) = (2S)-2-acetolactate + NADPH + H(+)</text>
        <dbReference type="Rhea" id="RHEA:22068"/>
        <dbReference type="ChEBI" id="CHEBI:15378"/>
        <dbReference type="ChEBI" id="CHEBI:49072"/>
        <dbReference type="ChEBI" id="CHEBI:57783"/>
        <dbReference type="ChEBI" id="CHEBI:58349"/>
        <dbReference type="ChEBI" id="CHEBI:58476"/>
        <dbReference type="EC" id="1.1.1.86"/>
    </reaction>
</comment>
<comment type="catalytic activity">
    <reaction evidence="1">
        <text>(2R,3R)-2,3-dihydroxy-3-methylpentanoate + NADP(+) = (S)-2-ethyl-2-hydroxy-3-oxobutanoate + NADPH + H(+)</text>
        <dbReference type="Rhea" id="RHEA:13493"/>
        <dbReference type="ChEBI" id="CHEBI:15378"/>
        <dbReference type="ChEBI" id="CHEBI:49256"/>
        <dbReference type="ChEBI" id="CHEBI:49258"/>
        <dbReference type="ChEBI" id="CHEBI:57783"/>
        <dbReference type="ChEBI" id="CHEBI:58349"/>
        <dbReference type="EC" id="1.1.1.86"/>
    </reaction>
</comment>
<comment type="cofactor">
    <cofactor evidence="1">
        <name>Mg(2+)</name>
        <dbReference type="ChEBI" id="CHEBI:18420"/>
    </cofactor>
    <text evidence="1">Binds 2 magnesium ions per subunit.</text>
</comment>
<comment type="pathway">
    <text evidence="1">Amino-acid biosynthesis; L-isoleucine biosynthesis; L-isoleucine from 2-oxobutanoate: step 2/4.</text>
</comment>
<comment type="pathway">
    <text evidence="1">Amino-acid biosynthesis; L-valine biosynthesis; L-valine from pyruvate: step 2/4.</text>
</comment>
<comment type="similarity">
    <text evidence="1">Belongs to the ketol-acid reductoisomerase family.</text>
</comment>